<keyword id="KW-1185">Reference proteome</keyword>
<dbReference type="EMBL" id="AL009126">
    <property type="protein sequence ID" value="CAB15256.1"/>
    <property type="molecule type" value="Genomic_DNA"/>
</dbReference>
<dbReference type="PIR" id="D70019">
    <property type="entry name" value="D70019"/>
</dbReference>
<dbReference type="RefSeq" id="NP_391146.1">
    <property type="nucleotide sequence ID" value="NC_000964.3"/>
</dbReference>
<dbReference type="RefSeq" id="WP_003228608.1">
    <property type="nucleotide sequence ID" value="NZ_OZ025638.1"/>
</dbReference>
<dbReference type="SMR" id="O32162"/>
<dbReference type="FunCoup" id="O32162">
    <property type="interactions" value="276"/>
</dbReference>
<dbReference type="IntAct" id="O32162">
    <property type="interactions" value="1"/>
</dbReference>
<dbReference type="MINT" id="O32162"/>
<dbReference type="STRING" id="224308.BSU32670"/>
<dbReference type="jPOST" id="O32162"/>
<dbReference type="PaxDb" id="224308-BSU32670"/>
<dbReference type="DNASU" id="936706"/>
<dbReference type="EnsemblBacteria" id="CAB15256">
    <property type="protein sequence ID" value="CAB15256"/>
    <property type="gene ID" value="BSU_32670"/>
</dbReference>
<dbReference type="GeneID" id="76983910"/>
<dbReference type="GeneID" id="936706"/>
<dbReference type="KEGG" id="bsu:BSU32670"/>
<dbReference type="PATRIC" id="fig|224308.179.peg.3538"/>
<dbReference type="eggNOG" id="COG0719">
    <property type="taxonomic scope" value="Bacteria"/>
</dbReference>
<dbReference type="InParanoid" id="O32162"/>
<dbReference type="OrthoDB" id="9803529at2"/>
<dbReference type="PhylomeDB" id="O32162"/>
<dbReference type="BioCyc" id="BSUB:BSU32670-MONOMER"/>
<dbReference type="PRO" id="PR:O32162"/>
<dbReference type="Proteomes" id="UP000001570">
    <property type="component" value="Chromosome"/>
</dbReference>
<dbReference type="GO" id="GO:0016226">
    <property type="term" value="P:iron-sulfur cluster assembly"/>
    <property type="evidence" value="ECO:0007669"/>
    <property type="project" value="InterPro"/>
</dbReference>
<dbReference type="InterPro" id="IPR055346">
    <property type="entry name" value="Fe-S_cluster_assembly_SufBD"/>
</dbReference>
<dbReference type="InterPro" id="IPR010231">
    <property type="entry name" value="SUF_FeS_clus_asmbl_SufB"/>
</dbReference>
<dbReference type="InterPro" id="IPR000825">
    <property type="entry name" value="SUF_FeS_clus_asmbl_SufBD_core"/>
</dbReference>
<dbReference type="InterPro" id="IPR037284">
    <property type="entry name" value="SUF_FeS_clus_asmbl_SufBD_sf"/>
</dbReference>
<dbReference type="InterPro" id="IPR045595">
    <property type="entry name" value="SufBD_N"/>
</dbReference>
<dbReference type="NCBIfam" id="TIGR01980">
    <property type="entry name" value="sufB"/>
    <property type="match status" value="1"/>
</dbReference>
<dbReference type="PANTHER" id="PTHR30508">
    <property type="entry name" value="FES CLUSTER ASSEMBLY PROTEIN SUF"/>
    <property type="match status" value="1"/>
</dbReference>
<dbReference type="PANTHER" id="PTHR30508:SF1">
    <property type="entry name" value="UPF0051 PROTEIN ABCI8, CHLOROPLASTIC-RELATED"/>
    <property type="match status" value="1"/>
</dbReference>
<dbReference type="Pfam" id="PF01458">
    <property type="entry name" value="SUFBD_core"/>
    <property type="match status" value="1"/>
</dbReference>
<dbReference type="Pfam" id="PF19295">
    <property type="entry name" value="SufBD_N"/>
    <property type="match status" value="1"/>
</dbReference>
<dbReference type="SUPFAM" id="SSF101960">
    <property type="entry name" value="Stabilizer of iron transporter SufD"/>
    <property type="match status" value="1"/>
</dbReference>
<proteinExistence type="inferred from homology"/>
<organism>
    <name type="scientific">Bacillus subtilis (strain 168)</name>
    <dbReference type="NCBI Taxonomy" id="224308"/>
    <lineage>
        <taxon>Bacteria</taxon>
        <taxon>Bacillati</taxon>
        <taxon>Bacillota</taxon>
        <taxon>Bacilli</taxon>
        <taxon>Bacillales</taxon>
        <taxon>Bacillaceae</taxon>
        <taxon>Bacillus</taxon>
    </lineage>
</organism>
<comment type="function">
    <text evidence="1">The SufBCD complex acts synergistically with SufE to stimulate the cysteine desulfurase activity of SufS. The SufBCD complex contributes to the assembly or repair of oxygen-labile iron-sulfur clusters under oxidative stress. May facilitate iron uptake from extracellular iron chelators under iron limitation (By similarity).</text>
</comment>
<comment type="subunit">
    <text evidence="1">Part of the SufBCD complex that contains SufB, SufC and SufD.</text>
</comment>
<comment type="similarity">
    <text evidence="2">Belongs to the iron-sulfur cluster assembly SufBD family.</text>
</comment>
<reference key="1">
    <citation type="journal article" date="1997" name="Nature">
        <title>The complete genome sequence of the Gram-positive bacterium Bacillus subtilis.</title>
        <authorList>
            <person name="Kunst F."/>
            <person name="Ogasawara N."/>
            <person name="Moszer I."/>
            <person name="Albertini A.M."/>
            <person name="Alloni G."/>
            <person name="Azevedo V."/>
            <person name="Bertero M.G."/>
            <person name="Bessieres P."/>
            <person name="Bolotin A."/>
            <person name="Borchert S."/>
            <person name="Borriss R."/>
            <person name="Boursier L."/>
            <person name="Brans A."/>
            <person name="Braun M."/>
            <person name="Brignell S.C."/>
            <person name="Bron S."/>
            <person name="Brouillet S."/>
            <person name="Bruschi C.V."/>
            <person name="Caldwell B."/>
            <person name="Capuano V."/>
            <person name="Carter N.M."/>
            <person name="Choi S.-K."/>
            <person name="Codani J.-J."/>
            <person name="Connerton I.F."/>
            <person name="Cummings N.J."/>
            <person name="Daniel R.A."/>
            <person name="Denizot F."/>
            <person name="Devine K.M."/>
            <person name="Duesterhoeft A."/>
            <person name="Ehrlich S.D."/>
            <person name="Emmerson P.T."/>
            <person name="Entian K.-D."/>
            <person name="Errington J."/>
            <person name="Fabret C."/>
            <person name="Ferrari E."/>
            <person name="Foulger D."/>
            <person name="Fritz C."/>
            <person name="Fujita M."/>
            <person name="Fujita Y."/>
            <person name="Fuma S."/>
            <person name="Galizzi A."/>
            <person name="Galleron N."/>
            <person name="Ghim S.-Y."/>
            <person name="Glaser P."/>
            <person name="Goffeau A."/>
            <person name="Golightly E.J."/>
            <person name="Grandi G."/>
            <person name="Guiseppi G."/>
            <person name="Guy B.J."/>
            <person name="Haga K."/>
            <person name="Haiech J."/>
            <person name="Harwood C.R."/>
            <person name="Henaut A."/>
            <person name="Hilbert H."/>
            <person name="Holsappel S."/>
            <person name="Hosono S."/>
            <person name="Hullo M.-F."/>
            <person name="Itaya M."/>
            <person name="Jones L.-M."/>
            <person name="Joris B."/>
            <person name="Karamata D."/>
            <person name="Kasahara Y."/>
            <person name="Klaerr-Blanchard M."/>
            <person name="Klein C."/>
            <person name="Kobayashi Y."/>
            <person name="Koetter P."/>
            <person name="Koningstein G."/>
            <person name="Krogh S."/>
            <person name="Kumano M."/>
            <person name="Kurita K."/>
            <person name="Lapidus A."/>
            <person name="Lardinois S."/>
            <person name="Lauber J."/>
            <person name="Lazarevic V."/>
            <person name="Lee S.-M."/>
            <person name="Levine A."/>
            <person name="Liu H."/>
            <person name="Masuda S."/>
            <person name="Mauel C."/>
            <person name="Medigue C."/>
            <person name="Medina N."/>
            <person name="Mellado R.P."/>
            <person name="Mizuno M."/>
            <person name="Moestl D."/>
            <person name="Nakai S."/>
            <person name="Noback M."/>
            <person name="Noone D."/>
            <person name="O'Reilly M."/>
            <person name="Ogawa K."/>
            <person name="Ogiwara A."/>
            <person name="Oudega B."/>
            <person name="Park S.-H."/>
            <person name="Parro V."/>
            <person name="Pohl T.M."/>
            <person name="Portetelle D."/>
            <person name="Porwollik S."/>
            <person name="Prescott A.M."/>
            <person name="Presecan E."/>
            <person name="Pujic P."/>
            <person name="Purnelle B."/>
            <person name="Rapoport G."/>
            <person name="Rey M."/>
            <person name="Reynolds S."/>
            <person name="Rieger M."/>
            <person name="Rivolta C."/>
            <person name="Rocha E."/>
            <person name="Roche B."/>
            <person name="Rose M."/>
            <person name="Sadaie Y."/>
            <person name="Sato T."/>
            <person name="Scanlan E."/>
            <person name="Schleich S."/>
            <person name="Schroeter R."/>
            <person name="Scoffone F."/>
            <person name="Sekiguchi J."/>
            <person name="Sekowska A."/>
            <person name="Seror S.J."/>
            <person name="Serror P."/>
            <person name="Shin B.-S."/>
            <person name="Soldo B."/>
            <person name="Sorokin A."/>
            <person name="Tacconi E."/>
            <person name="Takagi T."/>
            <person name="Takahashi H."/>
            <person name="Takemaru K."/>
            <person name="Takeuchi M."/>
            <person name="Tamakoshi A."/>
            <person name="Tanaka T."/>
            <person name="Terpstra P."/>
            <person name="Tognoni A."/>
            <person name="Tosato V."/>
            <person name="Uchiyama S."/>
            <person name="Vandenbol M."/>
            <person name="Vannier F."/>
            <person name="Vassarotti A."/>
            <person name="Viari A."/>
            <person name="Wambutt R."/>
            <person name="Wedler E."/>
            <person name="Wedler H."/>
            <person name="Weitzenegger T."/>
            <person name="Winters P."/>
            <person name="Wipat A."/>
            <person name="Yamamoto H."/>
            <person name="Yamane K."/>
            <person name="Yasumoto K."/>
            <person name="Yata K."/>
            <person name="Yoshida K."/>
            <person name="Yoshikawa H.-F."/>
            <person name="Zumstein E."/>
            <person name="Yoshikawa H."/>
            <person name="Danchin A."/>
        </authorList>
    </citation>
    <scope>NUCLEOTIDE SEQUENCE [LARGE SCALE GENOMIC DNA]</scope>
    <source>
        <strain>168</strain>
    </source>
</reference>
<protein>
    <recommendedName>
        <fullName>Iron-sulfur cluster assembly protein SufB</fullName>
    </recommendedName>
</protein>
<evidence type="ECO:0000250" key="1"/>
<evidence type="ECO:0000305" key="2"/>
<name>SUFB_BACSU</name>
<sequence length="465" mass="52730">MAKKMPDIGEYKYGFHDKDVSIFRSERGLTKEIVEEISRMKEEPQWMLDFRLKSLEHFYNMPMPQWGGDLNSLNFDEITYYVKPSERSERSWDEVPEEIKQTFDKLGIPEAEQKYLAGVSAQYESEVVYHNMKEDLEAQGIVFKDTDSALKENEDIFREHWAKVIPPTDNKFAALNSAVWSGGSFIYVPKGVKVETPLQAYFRINSENMGQFERTLIIVDEEASVHYVEGCTAPVYTTNSLHSAVVEIIVKKGGYCRYTTIQNWANNVYNLVTKRTVCEENATMEWIDGNIGSKLTMKYPACILKGEGARGMTLSIALAGKGQHQDAGAKMIHLAPNTSSTIVSKSISKQGGKVTYRGIVHFGRKAEGARSNIECDTLIMDNKSTSDTIPYNEILNDNISLEHEAKVSKVSEEQLFYLMSRGISEEEATEMIVMGFIEPFTKELPMEYAVEMNRLIKFEMEGSIG</sequence>
<feature type="chain" id="PRO_0000388724" description="Iron-sulfur cluster assembly protein SufB">
    <location>
        <begin position="1"/>
        <end position="465"/>
    </location>
</feature>
<gene>
    <name type="primary">sufB</name>
    <name type="ordered locus">BSU32670</name>
</gene>
<accession>O32162</accession>